<name>GSA_ACTP2</name>
<sequence>MSKSEQLFEKAQKVIPGGVNSPVRAFKGVGGTPVFIQKAEGAYITDSDGKKYIDYVGSWGPMVLGHNHPAIIDAVLKAVPNGLSFGAPTESEITLAELVTKLVPSIELVRMVSSGTEATMSAIRLARGYTGRDKIIKFEGCYHGHSDSLLVKAGSGALTLGQPSGPGVPADFAKHTLTCTYNDLDSVKTAFEQYPNEIACLIVEPVAGNMNCIPPKNDFLKGLRALCDQYGAVFIIDEVMTGFRVALGGAQAYYDVKPDLTTLGKIIGGGMPVGAFGGKKEIMEYIAPTGPVYQAGTLSGNPIAMAAGLACLTELSKAGNEEKLAAQTKTLAEGFKALADKHNVLFTAQYVGGMFGLFFTEQAEITNFQEVMKCDAAKFNRFFHLMLEQGVYLAPSAFEAGFMSLAHSDEDIQATLAAADKAFAQL</sequence>
<gene>
    <name evidence="1" type="primary">hemL</name>
    <name type="ordered locus">APL_1555</name>
</gene>
<comment type="catalytic activity">
    <reaction evidence="1">
        <text>(S)-4-amino-5-oxopentanoate = 5-aminolevulinate</text>
        <dbReference type="Rhea" id="RHEA:14265"/>
        <dbReference type="ChEBI" id="CHEBI:57501"/>
        <dbReference type="ChEBI" id="CHEBI:356416"/>
        <dbReference type="EC" id="5.4.3.8"/>
    </reaction>
</comment>
<comment type="cofactor">
    <cofactor evidence="1">
        <name>pyridoxal 5'-phosphate</name>
        <dbReference type="ChEBI" id="CHEBI:597326"/>
    </cofactor>
</comment>
<comment type="pathway">
    <text evidence="1">Porphyrin-containing compound metabolism; protoporphyrin-IX biosynthesis; 5-aminolevulinate from L-glutamyl-tRNA(Glu): step 2/2.</text>
</comment>
<comment type="subunit">
    <text evidence="1">Homodimer.</text>
</comment>
<comment type="subcellular location">
    <subcellularLocation>
        <location evidence="1">Cytoplasm</location>
    </subcellularLocation>
</comment>
<comment type="similarity">
    <text evidence="1">Belongs to the class-III pyridoxal-phosphate-dependent aminotransferase family. HemL subfamily.</text>
</comment>
<evidence type="ECO:0000255" key="1">
    <source>
        <dbReference type="HAMAP-Rule" id="MF_00375"/>
    </source>
</evidence>
<reference key="1">
    <citation type="journal article" date="2008" name="J. Bacteriol.">
        <title>The complete genome sequence of Actinobacillus pleuropneumoniae L20 (serotype 5b).</title>
        <authorList>
            <person name="Foote S.J."/>
            <person name="Bosse J.T."/>
            <person name="Bouevitch A.B."/>
            <person name="Langford P.R."/>
            <person name="Young N.M."/>
            <person name="Nash J.H.E."/>
        </authorList>
    </citation>
    <scope>NUCLEOTIDE SEQUENCE [LARGE SCALE GENOMIC DNA]</scope>
    <source>
        <strain>L20</strain>
    </source>
</reference>
<feature type="chain" id="PRO_0000300889" description="Glutamate-1-semialdehyde 2,1-aminomutase">
    <location>
        <begin position="1"/>
        <end position="426"/>
    </location>
</feature>
<feature type="modified residue" description="N6-(pyridoxal phosphate)lysine" evidence="1">
    <location>
        <position position="265"/>
    </location>
</feature>
<accession>A3N2K3</accession>
<organism>
    <name type="scientific">Actinobacillus pleuropneumoniae serotype 5b (strain L20)</name>
    <dbReference type="NCBI Taxonomy" id="416269"/>
    <lineage>
        <taxon>Bacteria</taxon>
        <taxon>Pseudomonadati</taxon>
        <taxon>Pseudomonadota</taxon>
        <taxon>Gammaproteobacteria</taxon>
        <taxon>Pasteurellales</taxon>
        <taxon>Pasteurellaceae</taxon>
        <taxon>Actinobacillus</taxon>
    </lineage>
</organism>
<protein>
    <recommendedName>
        <fullName evidence="1">Glutamate-1-semialdehyde 2,1-aminomutase</fullName>
        <shortName evidence="1">GSA</shortName>
        <ecNumber evidence="1">5.4.3.8</ecNumber>
    </recommendedName>
    <alternativeName>
        <fullName evidence="1">Glutamate-1-semialdehyde aminotransferase</fullName>
        <shortName evidence="1">GSA-AT</shortName>
    </alternativeName>
</protein>
<keyword id="KW-0963">Cytoplasm</keyword>
<keyword id="KW-0413">Isomerase</keyword>
<keyword id="KW-0627">Porphyrin biosynthesis</keyword>
<keyword id="KW-0663">Pyridoxal phosphate</keyword>
<keyword id="KW-1185">Reference proteome</keyword>
<dbReference type="EC" id="5.4.3.8" evidence="1"/>
<dbReference type="EMBL" id="CP000569">
    <property type="protein sequence ID" value="ABN74639.1"/>
    <property type="molecule type" value="Genomic_DNA"/>
</dbReference>
<dbReference type="RefSeq" id="WP_009874564.1">
    <property type="nucleotide sequence ID" value="NC_009053.1"/>
</dbReference>
<dbReference type="SMR" id="A3N2K3"/>
<dbReference type="STRING" id="416269.APL_1555"/>
<dbReference type="EnsemblBacteria" id="ABN74639">
    <property type="protein sequence ID" value="ABN74639"/>
    <property type="gene ID" value="APL_1555"/>
</dbReference>
<dbReference type="KEGG" id="apl:APL_1555"/>
<dbReference type="PATRIC" id="fig|416269.6.peg.1619"/>
<dbReference type="eggNOG" id="COG0001">
    <property type="taxonomic scope" value="Bacteria"/>
</dbReference>
<dbReference type="HOGENOM" id="CLU_016922_1_5_6"/>
<dbReference type="UniPathway" id="UPA00251">
    <property type="reaction ID" value="UER00317"/>
</dbReference>
<dbReference type="Proteomes" id="UP000001432">
    <property type="component" value="Chromosome"/>
</dbReference>
<dbReference type="GO" id="GO:0005737">
    <property type="term" value="C:cytoplasm"/>
    <property type="evidence" value="ECO:0007669"/>
    <property type="project" value="UniProtKB-SubCell"/>
</dbReference>
<dbReference type="GO" id="GO:0042286">
    <property type="term" value="F:glutamate-1-semialdehyde 2,1-aminomutase activity"/>
    <property type="evidence" value="ECO:0007669"/>
    <property type="project" value="UniProtKB-UniRule"/>
</dbReference>
<dbReference type="GO" id="GO:0030170">
    <property type="term" value="F:pyridoxal phosphate binding"/>
    <property type="evidence" value="ECO:0007669"/>
    <property type="project" value="InterPro"/>
</dbReference>
<dbReference type="GO" id="GO:0008483">
    <property type="term" value="F:transaminase activity"/>
    <property type="evidence" value="ECO:0007669"/>
    <property type="project" value="InterPro"/>
</dbReference>
<dbReference type="GO" id="GO:0006782">
    <property type="term" value="P:protoporphyrinogen IX biosynthetic process"/>
    <property type="evidence" value="ECO:0007669"/>
    <property type="project" value="UniProtKB-UniRule"/>
</dbReference>
<dbReference type="CDD" id="cd00610">
    <property type="entry name" value="OAT_like"/>
    <property type="match status" value="1"/>
</dbReference>
<dbReference type="FunFam" id="3.40.640.10:FF:000021">
    <property type="entry name" value="Glutamate-1-semialdehyde 2,1-aminomutase"/>
    <property type="match status" value="1"/>
</dbReference>
<dbReference type="Gene3D" id="3.90.1150.10">
    <property type="entry name" value="Aspartate Aminotransferase, domain 1"/>
    <property type="match status" value="1"/>
</dbReference>
<dbReference type="Gene3D" id="3.40.640.10">
    <property type="entry name" value="Type I PLP-dependent aspartate aminotransferase-like (Major domain)"/>
    <property type="match status" value="1"/>
</dbReference>
<dbReference type="HAMAP" id="MF_00375">
    <property type="entry name" value="HemL_aminotrans_3"/>
    <property type="match status" value="1"/>
</dbReference>
<dbReference type="InterPro" id="IPR004639">
    <property type="entry name" value="4pyrrol_synth_GluAld_NH2Trfase"/>
</dbReference>
<dbReference type="InterPro" id="IPR005814">
    <property type="entry name" value="Aminotrans_3"/>
</dbReference>
<dbReference type="InterPro" id="IPR049704">
    <property type="entry name" value="Aminotrans_3_PPA_site"/>
</dbReference>
<dbReference type="InterPro" id="IPR015424">
    <property type="entry name" value="PyrdxlP-dep_Trfase"/>
</dbReference>
<dbReference type="InterPro" id="IPR015421">
    <property type="entry name" value="PyrdxlP-dep_Trfase_major"/>
</dbReference>
<dbReference type="InterPro" id="IPR015422">
    <property type="entry name" value="PyrdxlP-dep_Trfase_small"/>
</dbReference>
<dbReference type="NCBIfam" id="TIGR00713">
    <property type="entry name" value="hemL"/>
    <property type="match status" value="1"/>
</dbReference>
<dbReference type="NCBIfam" id="NF000818">
    <property type="entry name" value="PRK00062.1"/>
    <property type="match status" value="1"/>
</dbReference>
<dbReference type="PANTHER" id="PTHR43713">
    <property type="entry name" value="GLUTAMATE-1-SEMIALDEHYDE 2,1-AMINOMUTASE"/>
    <property type="match status" value="1"/>
</dbReference>
<dbReference type="PANTHER" id="PTHR43713:SF3">
    <property type="entry name" value="GLUTAMATE-1-SEMIALDEHYDE 2,1-AMINOMUTASE 1, CHLOROPLASTIC-RELATED"/>
    <property type="match status" value="1"/>
</dbReference>
<dbReference type="Pfam" id="PF00202">
    <property type="entry name" value="Aminotran_3"/>
    <property type="match status" value="1"/>
</dbReference>
<dbReference type="SUPFAM" id="SSF53383">
    <property type="entry name" value="PLP-dependent transferases"/>
    <property type="match status" value="1"/>
</dbReference>
<dbReference type="PROSITE" id="PS00600">
    <property type="entry name" value="AA_TRANSFER_CLASS_3"/>
    <property type="match status" value="1"/>
</dbReference>
<proteinExistence type="inferred from homology"/>